<reference key="1">
    <citation type="submission" date="2008-05" db="EMBL/GenBank/DDBJ databases">
        <title>Genome sequence of Clostridium botulinum Ba4 strain 657.</title>
        <authorList>
            <person name="Shrivastava S."/>
            <person name="Brown J.L."/>
            <person name="Bruce D."/>
            <person name="Detter C."/>
            <person name="Munk C."/>
            <person name="Smith L.A."/>
            <person name="Smith T.J."/>
            <person name="Sutton G."/>
            <person name="Brettin T.S."/>
        </authorList>
    </citation>
    <scope>NUCLEOTIDE SEQUENCE [LARGE SCALE GENOMIC DNA]</scope>
    <source>
        <strain>657 / Type Ba4</strain>
    </source>
</reference>
<feature type="chain" id="PRO_1000204130" description="UvrABC system protein B">
    <location>
        <begin position="1"/>
        <end position="662"/>
    </location>
</feature>
<feature type="domain" description="Helicase ATP-binding" evidence="1">
    <location>
        <begin position="25"/>
        <end position="182"/>
    </location>
</feature>
<feature type="domain" description="Helicase C-terminal" evidence="1">
    <location>
        <begin position="429"/>
        <end position="595"/>
    </location>
</feature>
<feature type="domain" description="UVR" evidence="1">
    <location>
        <begin position="622"/>
        <end position="657"/>
    </location>
</feature>
<feature type="short sequence motif" description="Beta-hairpin">
    <location>
        <begin position="91"/>
        <end position="114"/>
    </location>
</feature>
<feature type="binding site" evidence="1">
    <location>
        <begin position="38"/>
        <end position="45"/>
    </location>
    <ligand>
        <name>ATP</name>
        <dbReference type="ChEBI" id="CHEBI:30616"/>
    </ligand>
</feature>
<evidence type="ECO:0000255" key="1">
    <source>
        <dbReference type="HAMAP-Rule" id="MF_00204"/>
    </source>
</evidence>
<organism>
    <name type="scientific">Clostridium botulinum (strain 657 / Type Ba4)</name>
    <dbReference type="NCBI Taxonomy" id="515621"/>
    <lineage>
        <taxon>Bacteria</taxon>
        <taxon>Bacillati</taxon>
        <taxon>Bacillota</taxon>
        <taxon>Clostridia</taxon>
        <taxon>Eubacteriales</taxon>
        <taxon>Clostridiaceae</taxon>
        <taxon>Clostridium</taxon>
    </lineage>
</organism>
<proteinExistence type="inferred from homology"/>
<name>UVRB_CLOB6</name>
<dbReference type="EMBL" id="CP001083">
    <property type="protein sequence ID" value="ACQ52904.1"/>
    <property type="molecule type" value="Genomic_DNA"/>
</dbReference>
<dbReference type="RefSeq" id="WP_003360279.1">
    <property type="nucleotide sequence ID" value="NC_012658.1"/>
</dbReference>
<dbReference type="SMR" id="C3KV20"/>
<dbReference type="KEGG" id="cbi:CLJ_B3690"/>
<dbReference type="HOGENOM" id="CLU_009621_2_1_9"/>
<dbReference type="Proteomes" id="UP000002333">
    <property type="component" value="Chromosome"/>
</dbReference>
<dbReference type="GO" id="GO:0005737">
    <property type="term" value="C:cytoplasm"/>
    <property type="evidence" value="ECO:0007669"/>
    <property type="project" value="UniProtKB-SubCell"/>
</dbReference>
<dbReference type="GO" id="GO:0009380">
    <property type="term" value="C:excinuclease repair complex"/>
    <property type="evidence" value="ECO:0007669"/>
    <property type="project" value="InterPro"/>
</dbReference>
<dbReference type="GO" id="GO:0005524">
    <property type="term" value="F:ATP binding"/>
    <property type="evidence" value="ECO:0007669"/>
    <property type="project" value="UniProtKB-UniRule"/>
</dbReference>
<dbReference type="GO" id="GO:0016887">
    <property type="term" value="F:ATP hydrolysis activity"/>
    <property type="evidence" value="ECO:0007669"/>
    <property type="project" value="InterPro"/>
</dbReference>
<dbReference type="GO" id="GO:0003677">
    <property type="term" value="F:DNA binding"/>
    <property type="evidence" value="ECO:0007669"/>
    <property type="project" value="UniProtKB-UniRule"/>
</dbReference>
<dbReference type="GO" id="GO:0009381">
    <property type="term" value="F:excinuclease ABC activity"/>
    <property type="evidence" value="ECO:0007669"/>
    <property type="project" value="UniProtKB-UniRule"/>
</dbReference>
<dbReference type="GO" id="GO:0004386">
    <property type="term" value="F:helicase activity"/>
    <property type="evidence" value="ECO:0007669"/>
    <property type="project" value="UniProtKB-KW"/>
</dbReference>
<dbReference type="GO" id="GO:0006289">
    <property type="term" value="P:nucleotide-excision repair"/>
    <property type="evidence" value="ECO:0007669"/>
    <property type="project" value="UniProtKB-UniRule"/>
</dbReference>
<dbReference type="GO" id="GO:0009432">
    <property type="term" value="P:SOS response"/>
    <property type="evidence" value="ECO:0007669"/>
    <property type="project" value="UniProtKB-UniRule"/>
</dbReference>
<dbReference type="CDD" id="cd17916">
    <property type="entry name" value="DEXHc_UvrB"/>
    <property type="match status" value="1"/>
</dbReference>
<dbReference type="CDD" id="cd18790">
    <property type="entry name" value="SF2_C_UvrB"/>
    <property type="match status" value="1"/>
</dbReference>
<dbReference type="Gene3D" id="3.40.50.300">
    <property type="entry name" value="P-loop containing nucleotide triphosphate hydrolases"/>
    <property type="match status" value="3"/>
</dbReference>
<dbReference type="Gene3D" id="4.10.860.10">
    <property type="entry name" value="UVR domain"/>
    <property type="match status" value="1"/>
</dbReference>
<dbReference type="HAMAP" id="MF_00204">
    <property type="entry name" value="UvrB"/>
    <property type="match status" value="1"/>
</dbReference>
<dbReference type="InterPro" id="IPR006935">
    <property type="entry name" value="Helicase/UvrB_N"/>
</dbReference>
<dbReference type="InterPro" id="IPR014001">
    <property type="entry name" value="Helicase_ATP-bd"/>
</dbReference>
<dbReference type="InterPro" id="IPR001650">
    <property type="entry name" value="Helicase_C-like"/>
</dbReference>
<dbReference type="InterPro" id="IPR027417">
    <property type="entry name" value="P-loop_NTPase"/>
</dbReference>
<dbReference type="InterPro" id="IPR001943">
    <property type="entry name" value="UVR_dom"/>
</dbReference>
<dbReference type="InterPro" id="IPR036876">
    <property type="entry name" value="UVR_dom_sf"/>
</dbReference>
<dbReference type="InterPro" id="IPR004807">
    <property type="entry name" value="UvrB"/>
</dbReference>
<dbReference type="InterPro" id="IPR041471">
    <property type="entry name" value="UvrB_inter"/>
</dbReference>
<dbReference type="InterPro" id="IPR024759">
    <property type="entry name" value="UvrB_YAD/RRR_dom"/>
</dbReference>
<dbReference type="NCBIfam" id="NF003673">
    <property type="entry name" value="PRK05298.1"/>
    <property type="match status" value="1"/>
</dbReference>
<dbReference type="NCBIfam" id="TIGR00631">
    <property type="entry name" value="uvrb"/>
    <property type="match status" value="1"/>
</dbReference>
<dbReference type="PANTHER" id="PTHR24029">
    <property type="entry name" value="UVRABC SYSTEM PROTEIN B"/>
    <property type="match status" value="1"/>
</dbReference>
<dbReference type="PANTHER" id="PTHR24029:SF0">
    <property type="entry name" value="UVRABC SYSTEM PROTEIN B"/>
    <property type="match status" value="1"/>
</dbReference>
<dbReference type="Pfam" id="PF00271">
    <property type="entry name" value="Helicase_C"/>
    <property type="match status" value="1"/>
</dbReference>
<dbReference type="Pfam" id="PF04851">
    <property type="entry name" value="ResIII"/>
    <property type="match status" value="1"/>
</dbReference>
<dbReference type="Pfam" id="PF02151">
    <property type="entry name" value="UVR"/>
    <property type="match status" value="1"/>
</dbReference>
<dbReference type="Pfam" id="PF12344">
    <property type="entry name" value="UvrB"/>
    <property type="match status" value="1"/>
</dbReference>
<dbReference type="Pfam" id="PF17757">
    <property type="entry name" value="UvrB_inter"/>
    <property type="match status" value="1"/>
</dbReference>
<dbReference type="SMART" id="SM00487">
    <property type="entry name" value="DEXDc"/>
    <property type="match status" value="1"/>
</dbReference>
<dbReference type="SMART" id="SM00490">
    <property type="entry name" value="HELICc"/>
    <property type="match status" value="1"/>
</dbReference>
<dbReference type="SUPFAM" id="SSF46600">
    <property type="entry name" value="C-terminal UvrC-binding domain of UvrB"/>
    <property type="match status" value="1"/>
</dbReference>
<dbReference type="SUPFAM" id="SSF52540">
    <property type="entry name" value="P-loop containing nucleoside triphosphate hydrolases"/>
    <property type="match status" value="2"/>
</dbReference>
<dbReference type="PROSITE" id="PS51192">
    <property type="entry name" value="HELICASE_ATP_BIND_1"/>
    <property type="match status" value="1"/>
</dbReference>
<dbReference type="PROSITE" id="PS51194">
    <property type="entry name" value="HELICASE_CTER"/>
    <property type="match status" value="1"/>
</dbReference>
<dbReference type="PROSITE" id="PS50151">
    <property type="entry name" value="UVR"/>
    <property type="match status" value="1"/>
</dbReference>
<comment type="function">
    <text evidence="1">The UvrABC repair system catalyzes the recognition and processing of DNA lesions. A damage recognition complex composed of 2 UvrA and 2 UvrB subunits scans DNA for abnormalities. Upon binding of the UvrA(2)B(2) complex to a putative damaged site, the DNA wraps around one UvrB monomer. DNA wrap is dependent on ATP binding by UvrB and probably causes local melting of the DNA helix, facilitating insertion of UvrB beta-hairpin between the DNA strands. Then UvrB probes one DNA strand for the presence of a lesion. If a lesion is found the UvrA subunits dissociate and the UvrB-DNA preincision complex is formed. This complex is subsequently bound by UvrC and the second UvrB is released. If no lesion is found, the DNA wraps around the other UvrB subunit that will check the other stand for damage.</text>
</comment>
<comment type="subunit">
    <text evidence="1">Forms a heterotetramer with UvrA during the search for lesions. Interacts with UvrC in an incision complex.</text>
</comment>
<comment type="subcellular location">
    <subcellularLocation>
        <location evidence="1">Cytoplasm</location>
    </subcellularLocation>
</comment>
<comment type="domain">
    <text evidence="1">The beta-hairpin motif is involved in DNA binding.</text>
</comment>
<comment type="similarity">
    <text evidence="1">Belongs to the UvrB family.</text>
</comment>
<keyword id="KW-0067">ATP-binding</keyword>
<keyword id="KW-0963">Cytoplasm</keyword>
<keyword id="KW-0227">DNA damage</keyword>
<keyword id="KW-0228">DNA excision</keyword>
<keyword id="KW-0234">DNA repair</keyword>
<keyword id="KW-0267">Excision nuclease</keyword>
<keyword id="KW-0347">Helicase</keyword>
<keyword id="KW-0378">Hydrolase</keyword>
<keyword id="KW-0547">Nucleotide-binding</keyword>
<keyword id="KW-0742">SOS response</keyword>
<protein>
    <recommendedName>
        <fullName evidence="1">UvrABC system protein B</fullName>
        <shortName evidence="1">Protein UvrB</shortName>
    </recommendedName>
    <alternativeName>
        <fullName evidence="1">Excinuclease ABC subunit B</fullName>
    </alternativeName>
</protein>
<accession>C3KV20</accession>
<sequence length="662" mass="76158">MNQFKVISKFNPTGDQPKAIKSIAKGIEKGEKFQTLIGVTGSGKTFTMANIIEKAQKPTLVLAHNKTLAAQLCSEFREFFPNNAVEYFVSYYDYYQPEAYVAQSDTYIEKDASINDEIDKLRHSATSALFERKDVIIVASVSCIYGLGNPEEYKKLTISLREGMEKDRDEIIKKLVEIQYERNDIDFSRGTFRVKGDVLDIFPASSSSKAIRVEFFGDEIDRIKEFDVLTGETITKLKHISIFPASHFATSKDRLEIAIKNIEEELEERVKELVSQDKILEAQRLKQRTNFDIEMMREVGYCTGIENYSRVLDGRAKGTPPQTLLDYFPQDFLLFIDESHVTLPQVKAMQAGDKSRKDSLVEYGFRLPCAYDNRPLTFKEFENKLNQIVFVSATPAKYELEYSTNTAEQVIRPTGLLDPEIIVKPVKGQIDDLYTSIQETIKKGFRILVTTLTKKMAEDLTDYLKEMGVKTRYLHSDIDTIERMKIIHDLRKGEFHVLVGINLLREGLDIPEVALVTILDADKEGFLRSETSLIQTVGRAARNSESKVIMYGDVITKSMEKTIKETNRRRKIQMEYNEKHGIVPKTIIKDIREVIQISDIAEERKEYDNLNEALKSYNNDIDKLIEKYEEEMREAAQNLQFEKAAHLRDVIYKLKRDKETEL</sequence>
<gene>
    <name evidence="1" type="primary">uvrB</name>
    <name type="ordered locus">CLJ_B3690</name>
</gene>